<feature type="chain" id="PRO_0000130356" description="Large ribosomal subunit protein uL29">
    <location>
        <begin position="1"/>
        <end position="65"/>
    </location>
</feature>
<organism>
    <name type="scientific">Bacteroides thetaiotaomicron (strain ATCC 29148 / DSM 2079 / JCM 5827 / CCUG 10774 / NCTC 10582 / VPI-5482 / E50)</name>
    <dbReference type="NCBI Taxonomy" id="226186"/>
    <lineage>
        <taxon>Bacteria</taxon>
        <taxon>Pseudomonadati</taxon>
        <taxon>Bacteroidota</taxon>
        <taxon>Bacteroidia</taxon>
        <taxon>Bacteroidales</taxon>
        <taxon>Bacteroidaceae</taxon>
        <taxon>Bacteroides</taxon>
    </lineage>
</organism>
<dbReference type="EMBL" id="AE015928">
    <property type="protein sequence ID" value="AAO77825.1"/>
    <property type="molecule type" value="Genomic_DNA"/>
</dbReference>
<dbReference type="RefSeq" id="NP_811631.1">
    <property type="nucleotide sequence ID" value="NC_004663.1"/>
</dbReference>
<dbReference type="RefSeq" id="WP_008762039.1">
    <property type="nucleotide sequence ID" value="NZ_UYXG01000001.1"/>
</dbReference>
<dbReference type="SMR" id="Q8A484"/>
<dbReference type="STRING" id="226186.BT_2719"/>
<dbReference type="PaxDb" id="226186-BT_2719"/>
<dbReference type="EnsemblBacteria" id="AAO77825">
    <property type="protein sequence ID" value="AAO77825"/>
    <property type="gene ID" value="BT_2719"/>
</dbReference>
<dbReference type="GeneID" id="69587579"/>
<dbReference type="KEGG" id="bth:BT_2719"/>
<dbReference type="PATRIC" id="fig|226186.12.peg.2762"/>
<dbReference type="eggNOG" id="COG0255">
    <property type="taxonomic scope" value="Bacteria"/>
</dbReference>
<dbReference type="HOGENOM" id="CLU_158491_5_1_10"/>
<dbReference type="InParanoid" id="Q8A484"/>
<dbReference type="OrthoDB" id="5296761at2"/>
<dbReference type="Proteomes" id="UP000001414">
    <property type="component" value="Chromosome"/>
</dbReference>
<dbReference type="GO" id="GO:1990904">
    <property type="term" value="C:ribonucleoprotein complex"/>
    <property type="evidence" value="ECO:0007669"/>
    <property type="project" value="UniProtKB-KW"/>
</dbReference>
<dbReference type="GO" id="GO:0005840">
    <property type="term" value="C:ribosome"/>
    <property type="evidence" value="ECO:0007669"/>
    <property type="project" value="UniProtKB-KW"/>
</dbReference>
<dbReference type="GO" id="GO:0003735">
    <property type="term" value="F:structural constituent of ribosome"/>
    <property type="evidence" value="ECO:0007669"/>
    <property type="project" value="InterPro"/>
</dbReference>
<dbReference type="GO" id="GO:0006412">
    <property type="term" value="P:translation"/>
    <property type="evidence" value="ECO:0007669"/>
    <property type="project" value="UniProtKB-UniRule"/>
</dbReference>
<dbReference type="CDD" id="cd00427">
    <property type="entry name" value="Ribosomal_L29_HIP"/>
    <property type="match status" value="1"/>
</dbReference>
<dbReference type="FunFam" id="1.10.287.310:FF:000003">
    <property type="entry name" value="50S ribosomal protein L29"/>
    <property type="match status" value="1"/>
</dbReference>
<dbReference type="Gene3D" id="1.10.287.310">
    <property type="match status" value="1"/>
</dbReference>
<dbReference type="HAMAP" id="MF_00374">
    <property type="entry name" value="Ribosomal_uL29"/>
    <property type="match status" value="1"/>
</dbReference>
<dbReference type="InterPro" id="IPR001854">
    <property type="entry name" value="Ribosomal_uL29"/>
</dbReference>
<dbReference type="InterPro" id="IPR018254">
    <property type="entry name" value="Ribosomal_uL29_CS"/>
</dbReference>
<dbReference type="InterPro" id="IPR036049">
    <property type="entry name" value="Ribosomal_uL29_sf"/>
</dbReference>
<dbReference type="NCBIfam" id="TIGR00012">
    <property type="entry name" value="L29"/>
    <property type="match status" value="1"/>
</dbReference>
<dbReference type="Pfam" id="PF00831">
    <property type="entry name" value="Ribosomal_L29"/>
    <property type="match status" value="1"/>
</dbReference>
<dbReference type="SUPFAM" id="SSF46561">
    <property type="entry name" value="Ribosomal protein L29 (L29p)"/>
    <property type="match status" value="1"/>
</dbReference>
<dbReference type="PROSITE" id="PS00579">
    <property type="entry name" value="RIBOSOMAL_L29"/>
    <property type="match status" value="1"/>
</dbReference>
<sequence length="65" mass="7652">MKIAEIKEMTTNDLVERVEAETANYNQMVINHSISPLENPAQIKQLRRTIARMKTELRQRELNNK</sequence>
<keyword id="KW-1185">Reference proteome</keyword>
<keyword id="KW-0687">Ribonucleoprotein</keyword>
<keyword id="KW-0689">Ribosomal protein</keyword>
<gene>
    <name evidence="1" type="primary">rpmC</name>
    <name type="ordered locus">BT_2719</name>
</gene>
<proteinExistence type="inferred from homology"/>
<comment type="similarity">
    <text evidence="1">Belongs to the universal ribosomal protein uL29 family.</text>
</comment>
<protein>
    <recommendedName>
        <fullName evidence="1">Large ribosomal subunit protein uL29</fullName>
    </recommendedName>
    <alternativeName>
        <fullName evidence="2">50S ribosomal protein L29</fullName>
    </alternativeName>
</protein>
<accession>Q8A484</accession>
<reference key="1">
    <citation type="journal article" date="2003" name="Science">
        <title>A genomic view of the human-Bacteroides thetaiotaomicron symbiosis.</title>
        <authorList>
            <person name="Xu J."/>
            <person name="Bjursell M.K."/>
            <person name="Himrod J."/>
            <person name="Deng S."/>
            <person name="Carmichael L.K."/>
            <person name="Chiang H.C."/>
            <person name="Hooper L.V."/>
            <person name="Gordon J.I."/>
        </authorList>
    </citation>
    <scope>NUCLEOTIDE SEQUENCE [LARGE SCALE GENOMIC DNA]</scope>
    <source>
        <strain>ATCC 29148 / DSM 2079 / JCM 5827 / CCUG 10774 / NCTC 10582 / VPI-5482 / E50</strain>
    </source>
</reference>
<evidence type="ECO:0000255" key="1">
    <source>
        <dbReference type="HAMAP-Rule" id="MF_00374"/>
    </source>
</evidence>
<evidence type="ECO:0000305" key="2"/>
<name>RL29_BACTN</name>